<dbReference type="SMR" id="P83485"/>
<dbReference type="GO" id="GO:0005576">
    <property type="term" value="C:extracellular region"/>
    <property type="evidence" value="ECO:0007669"/>
    <property type="project" value="UniProtKB-SubCell"/>
</dbReference>
<dbReference type="GO" id="GO:0005184">
    <property type="term" value="F:neuropeptide hormone activity"/>
    <property type="evidence" value="ECO:0007669"/>
    <property type="project" value="InterPro"/>
</dbReference>
<dbReference type="GO" id="GO:0007623">
    <property type="term" value="P:circadian rhythm"/>
    <property type="evidence" value="ECO:0007669"/>
    <property type="project" value="TreeGrafter"/>
</dbReference>
<dbReference type="GO" id="GO:0006006">
    <property type="term" value="P:glucose metabolic process"/>
    <property type="evidence" value="ECO:0007669"/>
    <property type="project" value="UniProtKB-KW"/>
</dbReference>
<dbReference type="GO" id="GO:0007218">
    <property type="term" value="P:neuropeptide signaling pathway"/>
    <property type="evidence" value="ECO:0007669"/>
    <property type="project" value="UniProtKB-KW"/>
</dbReference>
<dbReference type="Gene3D" id="1.10.2010.10">
    <property type="entry name" value="Crustacean CHH/MIH/GIH neurohormone"/>
    <property type="match status" value="1"/>
</dbReference>
<dbReference type="InterPro" id="IPR018251">
    <property type="entry name" value="Crust_neurhormone_CS"/>
</dbReference>
<dbReference type="InterPro" id="IPR031098">
    <property type="entry name" value="Crust_neurohorm"/>
</dbReference>
<dbReference type="InterPro" id="IPR035957">
    <property type="entry name" value="Crust_neurohorm_sf"/>
</dbReference>
<dbReference type="InterPro" id="IPR001166">
    <property type="entry name" value="Hyperglycemic"/>
</dbReference>
<dbReference type="InterPro" id="IPR000346">
    <property type="entry name" value="Hyperglycemic1"/>
</dbReference>
<dbReference type="PANTHER" id="PTHR35981">
    <property type="entry name" value="ION TRANSPORT PEPTIDE, ISOFORM C"/>
    <property type="match status" value="1"/>
</dbReference>
<dbReference type="PANTHER" id="PTHR35981:SF2">
    <property type="entry name" value="ION TRANSPORT PEPTIDE, ISOFORM C"/>
    <property type="match status" value="1"/>
</dbReference>
<dbReference type="Pfam" id="PF01147">
    <property type="entry name" value="Crust_neurohorm"/>
    <property type="match status" value="1"/>
</dbReference>
<dbReference type="PRINTS" id="PR00548">
    <property type="entry name" value="HYPRGLYCEMC1"/>
</dbReference>
<dbReference type="PRINTS" id="PR00550">
    <property type="entry name" value="HYPRGLYCEMIC"/>
</dbReference>
<dbReference type="SUPFAM" id="SSF81778">
    <property type="entry name" value="Crustacean CHH/MIH/GIH neurohormone"/>
    <property type="match status" value="1"/>
</dbReference>
<dbReference type="PROSITE" id="PS01250">
    <property type="entry name" value="CHH_MIH_GIH"/>
    <property type="match status" value="1"/>
</dbReference>
<protein>
    <recommendedName>
        <fullName>Crustacean hyperglycemic hormone A</fullName>
        <shortName>CHHA</shortName>
    </recommendedName>
</protein>
<feature type="chain" id="PRO_0000209855" description="Crustacean hyperglycemic hormone A">
    <location>
        <begin position="1"/>
        <end position="72"/>
    </location>
</feature>
<feature type="modified residue" description="Pyrrolidone carboxylic acid" evidence="2">
    <location>
        <position position="1"/>
    </location>
</feature>
<feature type="modified residue" description="D-phenylalanine; in form CHHA-II" evidence="2">
    <location>
        <position position="3"/>
    </location>
</feature>
<feature type="modified residue" description="Valine amide" evidence="2">
    <location>
        <position position="72"/>
    </location>
</feature>
<feature type="disulfide bond" evidence="1">
    <location>
        <begin position="7"/>
        <end position="43"/>
    </location>
</feature>
<feature type="disulfide bond" evidence="1">
    <location>
        <begin position="23"/>
        <end position="39"/>
    </location>
</feature>
<feature type="disulfide bond" evidence="1">
    <location>
        <begin position="26"/>
        <end position="52"/>
    </location>
</feature>
<proteinExistence type="evidence at protein level"/>
<keyword id="KW-0027">Amidation</keyword>
<keyword id="KW-0119">Carbohydrate metabolism</keyword>
<keyword id="KW-0208">D-amino acid</keyword>
<keyword id="KW-0903">Direct protein sequencing</keyword>
<keyword id="KW-1015">Disulfide bond</keyword>
<keyword id="KW-0313">Glucose metabolism</keyword>
<keyword id="KW-0372">Hormone</keyword>
<keyword id="KW-0527">Neuropeptide</keyword>
<keyword id="KW-0873">Pyrrolidone carboxylic acid</keyword>
<keyword id="KW-0964">Secreted</keyword>
<sequence>QVFDQACKGVYDRAIFKKLDRVCDDCYNLYRKPYVAVSCRGNCYNNLVFRQCLEELFLGNGFNEYISGVQTV</sequence>
<reference key="1">
    <citation type="journal article" date="2003" name="Peptides">
        <title>Two genetic variants of the crustacean hyperglycemic hormone (CHH) from the Australian crayfish, Cherax destructor: detection of chiral isoforms due to posttranslational modification.</title>
        <authorList>
            <person name="Bulau P."/>
            <person name="Meisen I."/>
            <person name="Reichwein-Roderburg B."/>
            <person name="Peter-Katalinic J."/>
            <person name="Keller R."/>
        </authorList>
    </citation>
    <scope>PROTEIN SEQUENCE</scope>
    <scope>MASS SPECTROMETRY</scope>
    <scope>PYROGLUTAMATE FORMATION AT GLN-1</scope>
    <scope>D-AMINO ACID AT PHE-3</scope>
    <scope>AMIDATION AT VAL-72</scope>
    <source>
        <tissue>Sinus gland</tissue>
    </source>
</reference>
<evidence type="ECO:0000250" key="1"/>
<evidence type="ECO:0000269" key="2">
    <source>
    </source>
</evidence>
<evidence type="ECO:0000305" key="3"/>
<comment type="function">
    <text>Hormone found in the sinus gland of isopods and decapods which controls the blood sugar level. Has a secretagogue action over the amylase released from the midgut gland. May act as a stress hormone and may be involved in the control of molting and reproduction.</text>
</comment>
<comment type="subcellular location">
    <subcellularLocation>
        <location>Secreted</location>
    </subcellularLocation>
</comment>
<comment type="PTM">
    <text evidence="2">Stereoinversion of L-Phe (in CHHA-I) to D-Phe (in CHHA-II).</text>
</comment>
<comment type="mass spectrometry"/>
<comment type="similarity">
    <text evidence="3">Belongs to the arthropod CHH/MIH/GIH/VIH hormone family.</text>
</comment>
<name>CHHA_CHEDE</name>
<accession>P83485</accession>
<organism evidence="3">
    <name type="scientific">Cherax destructor</name>
    <name type="common">Common yabby crayfish</name>
    <dbReference type="NCBI Taxonomy" id="6723"/>
    <lineage>
        <taxon>Eukaryota</taxon>
        <taxon>Metazoa</taxon>
        <taxon>Ecdysozoa</taxon>
        <taxon>Arthropoda</taxon>
        <taxon>Crustacea</taxon>
        <taxon>Multicrustacea</taxon>
        <taxon>Malacostraca</taxon>
        <taxon>Eumalacostraca</taxon>
        <taxon>Eucarida</taxon>
        <taxon>Decapoda</taxon>
        <taxon>Pleocyemata</taxon>
        <taxon>Astacidea</taxon>
        <taxon>Parastacoidea</taxon>
        <taxon>Parastacidae</taxon>
        <taxon>Cherax</taxon>
    </lineage>
</organism>